<sequence>MAQFNSTWAISGRRSAISVDTFHALSIQAPGLLLGTLLFYLFYKYTTRIYFHPLSGIPGPRLAAATHLYEAYYNILRQGLSKRAVQLHKAYNSPVIRLGTNRVHVGDPSYYHTIYNSGTDYHKDPGVYKLLGIDGSILTITDPEEHKQYRSIVGSLFSRKTADDLAPMMAALLNRSTESMARQGREGKPSVIQRIYRSVAADMVSYLLFNRPLGLIDSPQEADHYHSFMLSIDRFTAITWPRFYYPILNWVIDSFPAFVVERLQPGLRNLQELFKGWLDESIAAHDAGKPVESRSTYFDLMIEAKRKTGEPLRPDQLFDDILNYLVAGMEATSYVLSFGTYFLLNSPEAKAKLEAELLEASPFIREKFDHRRIMALPYLTAVVKECLRLSNTVPGFLPRVVPKGGVDIGGYHIPGGTQISMIHPVVELNEEIFPNPHEFIPERWLGDNGQDLEKWAIAFSKGRRQCIGKNLAYMMLYASIAVVFSRLEMELYETTAADMEIIDQFAPIIQGVVKVKITKDRWRE</sequence>
<proteinExistence type="evidence at protein level"/>
<accession>A0A397HSG2</accession>
<dbReference type="EC" id="1.-.-.-" evidence="3"/>
<dbReference type="EMBL" id="NKHU02000029">
    <property type="protein sequence ID" value="RHZ63460.1"/>
    <property type="molecule type" value="Genomic_DNA"/>
</dbReference>
<dbReference type="SMR" id="A0A397HSG2"/>
<dbReference type="STRING" id="41047.A0A397HSG2"/>
<dbReference type="VEuPathDB" id="FungiDB:CDV56_108814"/>
<dbReference type="OrthoDB" id="3945418at2759"/>
<dbReference type="Proteomes" id="UP000215305">
    <property type="component" value="Unassembled WGS sequence"/>
</dbReference>
<dbReference type="GO" id="GO:0016020">
    <property type="term" value="C:membrane"/>
    <property type="evidence" value="ECO:0007669"/>
    <property type="project" value="UniProtKB-SubCell"/>
</dbReference>
<dbReference type="GO" id="GO:0020037">
    <property type="term" value="F:heme binding"/>
    <property type="evidence" value="ECO:0007669"/>
    <property type="project" value="InterPro"/>
</dbReference>
<dbReference type="GO" id="GO:0005506">
    <property type="term" value="F:iron ion binding"/>
    <property type="evidence" value="ECO:0007669"/>
    <property type="project" value="InterPro"/>
</dbReference>
<dbReference type="GO" id="GO:0004497">
    <property type="term" value="F:monooxygenase activity"/>
    <property type="evidence" value="ECO:0007669"/>
    <property type="project" value="UniProtKB-KW"/>
</dbReference>
<dbReference type="GO" id="GO:0016705">
    <property type="term" value="F:oxidoreductase activity, acting on paired donors, with incorporation or reduction of molecular oxygen"/>
    <property type="evidence" value="ECO:0007669"/>
    <property type="project" value="InterPro"/>
</dbReference>
<dbReference type="GO" id="GO:0044283">
    <property type="term" value="P:small molecule biosynthetic process"/>
    <property type="evidence" value="ECO:0007669"/>
    <property type="project" value="UniProtKB-ARBA"/>
</dbReference>
<dbReference type="CDD" id="cd11062">
    <property type="entry name" value="CYP58-like"/>
    <property type="match status" value="1"/>
</dbReference>
<dbReference type="Gene3D" id="1.10.630.10">
    <property type="entry name" value="Cytochrome P450"/>
    <property type="match status" value="1"/>
</dbReference>
<dbReference type="InterPro" id="IPR001128">
    <property type="entry name" value="Cyt_P450"/>
</dbReference>
<dbReference type="InterPro" id="IPR017972">
    <property type="entry name" value="Cyt_P450_CS"/>
</dbReference>
<dbReference type="InterPro" id="IPR002401">
    <property type="entry name" value="Cyt_P450_E_grp-I"/>
</dbReference>
<dbReference type="InterPro" id="IPR036396">
    <property type="entry name" value="Cyt_P450_sf"/>
</dbReference>
<dbReference type="InterPro" id="IPR050121">
    <property type="entry name" value="Cytochrome_P450_monoxygenase"/>
</dbReference>
<dbReference type="PANTHER" id="PTHR24305">
    <property type="entry name" value="CYTOCHROME P450"/>
    <property type="match status" value="1"/>
</dbReference>
<dbReference type="PANTHER" id="PTHR24305:SF210">
    <property type="entry name" value="CYTOCHROME P450 MONOOXYGENASE ASQL-RELATED"/>
    <property type="match status" value="1"/>
</dbReference>
<dbReference type="Pfam" id="PF00067">
    <property type="entry name" value="p450"/>
    <property type="match status" value="1"/>
</dbReference>
<dbReference type="PRINTS" id="PR00463">
    <property type="entry name" value="EP450I"/>
</dbReference>
<dbReference type="PRINTS" id="PR00385">
    <property type="entry name" value="P450"/>
</dbReference>
<dbReference type="SUPFAM" id="SSF48264">
    <property type="entry name" value="Cytochrome P450"/>
    <property type="match status" value="1"/>
</dbReference>
<dbReference type="PROSITE" id="PS00086">
    <property type="entry name" value="CYTOCHROME_P450"/>
    <property type="match status" value="1"/>
</dbReference>
<organism>
    <name type="scientific">Aspergillus thermomutatus</name>
    <name type="common">Neosartorya pseudofischeri</name>
    <dbReference type="NCBI Taxonomy" id="41047"/>
    <lineage>
        <taxon>Eukaryota</taxon>
        <taxon>Fungi</taxon>
        <taxon>Dikarya</taxon>
        <taxon>Ascomycota</taxon>
        <taxon>Pezizomycotina</taxon>
        <taxon>Eurotiomycetes</taxon>
        <taxon>Eurotiomycetidae</taxon>
        <taxon>Eurotiales</taxon>
        <taxon>Aspergillaceae</taxon>
        <taxon>Aspergillus</taxon>
        <taxon>Aspergillus subgen. Fumigati</taxon>
    </lineage>
</organism>
<feature type="chain" id="PRO_0000460655" description="Cytochrome P450 monooxygenase ankB">
    <location>
        <begin position="1"/>
        <end position="524"/>
    </location>
</feature>
<feature type="transmembrane region" description="Helical" evidence="2">
    <location>
        <begin position="22"/>
        <end position="42"/>
    </location>
</feature>
<feature type="binding site" description="axial binding residue" evidence="1">
    <location>
        <position position="466"/>
    </location>
    <ligand>
        <name>heme</name>
        <dbReference type="ChEBI" id="CHEBI:30413"/>
    </ligand>
    <ligandPart>
        <name>Fe</name>
        <dbReference type="ChEBI" id="CHEBI:18248"/>
    </ligandPart>
</feature>
<name>ANKB_ASPTH</name>
<comment type="function">
    <text evidence="3">Cytochrome P450 monooxygenase; part of the ank cluster that mediates the biosynthesis of NK13650 C, a highly modified cyclo-arginine-tyrosine dipeptide (PubMed:36702957). AnkB is responsible for desaturation of the ankA product cyclo-Arg-Tyr diketopiperazine, likely through hydroxylation of the benzylic position followed by dehydration to yield a dehydro-cyclodipeptide (PubMed:36702957). Within the pathway, the cyclodipeptide synthase ankA acts as the scaffold-generating enzyme and is responsible for formation of the cyclo-Arg-Tyr diketopiperazine (cRY) from L-Arg and L-Tyr. The ankA product cRY is desaturated by the cytochrome P450 monooxygenase ankB to yield a dehydro-cyclodipeptide intermediate. The FAD-dependent monooxygenase ankC then installs the m-OH, ankD catalyzes the attachment of L-homoserine, and ankE ligates citrate to the ankD product to yield NK13650 B. The O-methyltransferase ankF is responsible for methylation of the C-17 phenol group of NK13650 B to produce NK13650 D. Amidation of NK13650 D with L-Asp by ankG then leads to the production of NK13650 C, whereas amidation of NK13650 B produces NK13650 A (PubMed:36702957).</text>
</comment>
<comment type="catalytic activity">
    <reaction evidence="3">
        <text>cyclo(L-arginyl-tyrosyl) + reduced [NADPH--hemoprotein reductase] + O2 = cyclo(L-arginyl-L-dehydrotyrosyl) + oxidized [NADPH--hemoprotein reductase] + 2 H2O + H(+)</text>
        <dbReference type="Rhea" id="RHEA:80207"/>
        <dbReference type="Rhea" id="RHEA-COMP:11964"/>
        <dbReference type="Rhea" id="RHEA-COMP:11965"/>
        <dbReference type="ChEBI" id="CHEBI:15377"/>
        <dbReference type="ChEBI" id="CHEBI:15378"/>
        <dbReference type="ChEBI" id="CHEBI:15379"/>
        <dbReference type="ChEBI" id="CHEBI:57618"/>
        <dbReference type="ChEBI" id="CHEBI:58210"/>
        <dbReference type="ChEBI" id="CHEBI:230544"/>
        <dbReference type="ChEBI" id="CHEBI:231472"/>
    </reaction>
    <physiologicalReaction direction="left-to-right" evidence="3">
        <dbReference type="Rhea" id="RHEA:80208"/>
    </physiologicalReaction>
</comment>
<comment type="cofactor">
    <cofactor evidence="1">
        <name>heme</name>
        <dbReference type="ChEBI" id="CHEBI:30413"/>
    </cofactor>
</comment>
<comment type="pathway">
    <text evidence="3">Alkaloid biosynthesis.</text>
</comment>
<comment type="subcellular location">
    <subcellularLocation>
        <location evidence="2">Membrane</location>
        <topology evidence="2">Single-pass membrane protein</topology>
    </subcellularLocation>
</comment>
<comment type="similarity">
    <text evidence="5">Belongs to the cytochrome P450 family.</text>
</comment>
<protein>
    <recommendedName>
        <fullName evidence="4">Cytochrome P450 monooxygenase ankB</fullName>
        <ecNumber evidence="3">1.-.-.-</ecNumber>
    </recommendedName>
    <alternativeName>
        <fullName evidence="4">Ank biosynthesis cluster protein B</fullName>
    </alternativeName>
</protein>
<reference key="1">
    <citation type="journal article" date="2019" name="Microbiol. Resour. Announc.">
        <title>Draft Genome Sequence of Azole-Resistant Aspergillus thermomutatus (Neosartorya pseudofischeri) Strain HMR-AF-39, Isolated from a Human Nasal Septum Abscess Aspirate.</title>
        <authorList>
            <person name="Parent-Michaud M."/>
            <person name="Dufresne P.J."/>
            <person name="Fournier E."/>
            <person name="Martineau C."/>
            <person name="Moreira S."/>
            <person name="Perkins V."/>
            <person name="de Repentigny L."/>
            <person name="Dufresne S.F."/>
        </authorList>
    </citation>
    <scope>NUCLEOTIDE SEQUENCE [LARGE SCALE GENOMIC DNA]</scope>
    <source>
        <strain>HMR-AF-39/LSPQ-01276</strain>
    </source>
</reference>
<reference key="2">
    <citation type="journal article" date="2023" name="Nat. Chem. Biol.">
        <title>Genome mining for unknown-unknown natural products.</title>
        <authorList>
            <person name="Yee D.A."/>
            <person name="Niwa K."/>
            <person name="Perlatti B."/>
            <person name="Chen M."/>
            <person name="Li Y."/>
            <person name="Tang Y."/>
        </authorList>
    </citation>
    <scope>FUNCTION</scope>
    <scope>CATALYTIC ACTIVITY</scope>
    <scope>PATHWAY</scope>
</reference>
<keyword id="KW-0349">Heme</keyword>
<keyword id="KW-0408">Iron</keyword>
<keyword id="KW-0472">Membrane</keyword>
<keyword id="KW-0479">Metal-binding</keyword>
<keyword id="KW-0503">Monooxygenase</keyword>
<keyword id="KW-0560">Oxidoreductase</keyword>
<keyword id="KW-1185">Reference proteome</keyword>
<keyword id="KW-0812">Transmembrane</keyword>
<keyword id="KW-1133">Transmembrane helix</keyword>
<evidence type="ECO:0000250" key="1">
    <source>
        <dbReference type="UniProtKB" id="P04798"/>
    </source>
</evidence>
<evidence type="ECO:0000255" key="2"/>
<evidence type="ECO:0000269" key="3">
    <source>
    </source>
</evidence>
<evidence type="ECO:0000303" key="4">
    <source>
    </source>
</evidence>
<evidence type="ECO:0000305" key="5"/>
<gene>
    <name evidence="4" type="primary">ankB</name>
    <name type="ORF">CDV56_108814</name>
</gene>